<sequence>MKQSILSFIQKHQLLKEGAKIIVGVSGGSDSMALLHFLKNLQEQWEIEVIALTINHQLRGEDSTADQKFVEQWCFHSDIRCIAHQVDVGEYQRQYRVSEELAARRLRYEIYEAEMRKQGADYLALGHHGDDQVETLFMRLTRVATSNAFEGIPVKRSFASGQLIRPFLCVNKQLILNYVKENEVPFREDQTNKDNKYTRNYYRNEIIPLLTKNNERLFITAQRLSETLREDENYLAKEANRMVEEVIIWDENFSKISFSNQAFIERPHALQRRAYHLILNYLYDTLPKDLSYIHEEKFFALIERQEGNTYIDFPLSLRVENSYGKIQLYFPNRHPRHSVFHLPLQVPDQVELPDGARITSEWIDATLDKNSRNNIIIPIDSVALPLHIRTRKPGDRMTWDGLKGTKKLKDIWIDAKIPTNERDTWPIVTDDNNTIIWLVGLKKAFGSNQFCQSGEKIKLSYHKGNI</sequence>
<proteinExistence type="inferred from homology"/>
<name>TILS_OCEIH</name>
<comment type="function">
    <text evidence="1">Ligates lysine onto the cytidine present at position 34 of the AUA codon-specific tRNA(Ile) that contains the anticodon CAU, in an ATP-dependent manner. Cytidine is converted to lysidine, thus changing the amino acid specificity of the tRNA from methionine to isoleucine.</text>
</comment>
<comment type="catalytic activity">
    <reaction evidence="1">
        <text>cytidine(34) in tRNA(Ile2) + L-lysine + ATP = lysidine(34) in tRNA(Ile2) + AMP + diphosphate + H(+)</text>
        <dbReference type="Rhea" id="RHEA:43744"/>
        <dbReference type="Rhea" id="RHEA-COMP:10625"/>
        <dbReference type="Rhea" id="RHEA-COMP:10670"/>
        <dbReference type="ChEBI" id="CHEBI:15378"/>
        <dbReference type="ChEBI" id="CHEBI:30616"/>
        <dbReference type="ChEBI" id="CHEBI:32551"/>
        <dbReference type="ChEBI" id="CHEBI:33019"/>
        <dbReference type="ChEBI" id="CHEBI:82748"/>
        <dbReference type="ChEBI" id="CHEBI:83665"/>
        <dbReference type="ChEBI" id="CHEBI:456215"/>
        <dbReference type="EC" id="6.3.4.19"/>
    </reaction>
</comment>
<comment type="subcellular location">
    <subcellularLocation>
        <location evidence="1">Cytoplasm</location>
    </subcellularLocation>
</comment>
<comment type="domain">
    <text>The N-terminal region contains the highly conserved SGGXDS motif, predicted to be a P-loop motif involved in ATP binding.</text>
</comment>
<comment type="similarity">
    <text evidence="1">Belongs to the tRNA(Ile)-lysidine synthase family.</text>
</comment>
<reference key="1">
    <citation type="journal article" date="2002" name="Nucleic Acids Res.">
        <title>Genome sequence of Oceanobacillus iheyensis isolated from the Iheya Ridge and its unexpected adaptive capabilities to extreme environments.</title>
        <authorList>
            <person name="Takami H."/>
            <person name="Takaki Y."/>
            <person name="Uchiyama I."/>
        </authorList>
    </citation>
    <scope>NUCLEOTIDE SEQUENCE [LARGE SCALE GENOMIC DNA]</scope>
    <source>
        <strain>DSM 14371 / CIP 107618 / JCM 11309 / KCTC 3954 / HTE831</strain>
    </source>
</reference>
<organism>
    <name type="scientific">Oceanobacillus iheyensis (strain DSM 14371 / CIP 107618 / JCM 11309 / KCTC 3954 / HTE831)</name>
    <dbReference type="NCBI Taxonomy" id="221109"/>
    <lineage>
        <taxon>Bacteria</taxon>
        <taxon>Bacillati</taxon>
        <taxon>Bacillota</taxon>
        <taxon>Bacilli</taxon>
        <taxon>Bacillales</taxon>
        <taxon>Bacillaceae</taxon>
        <taxon>Oceanobacillus</taxon>
    </lineage>
</organism>
<protein>
    <recommendedName>
        <fullName evidence="1">tRNA(Ile)-lysidine synthase</fullName>
        <ecNumber evidence="1">6.3.4.19</ecNumber>
    </recommendedName>
    <alternativeName>
        <fullName evidence="1">tRNA(Ile)-2-lysyl-cytidine synthase</fullName>
    </alternativeName>
    <alternativeName>
        <fullName evidence="1">tRNA(Ile)-lysidine synthetase</fullName>
    </alternativeName>
</protein>
<dbReference type="EC" id="6.3.4.19" evidence="1"/>
<dbReference type="EMBL" id="BA000028">
    <property type="protein sequence ID" value="BAC12033.1"/>
    <property type="molecule type" value="Genomic_DNA"/>
</dbReference>
<dbReference type="RefSeq" id="WP_011064479.1">
    <property type="nucleotide sequence ID" value="NC_004193.1"/>
</dbReference>
<dbReference type="SMR" id="Q8EU18"/>
<dbReference type="STRING" id="221109.gene:10732240"/>
<dbReference type="KEGG" id="oih:OB0077"/>
<dbReference type="eggNOG" id="COG0037">
    <property type="taxonomic scope" value="Bacteria"/>
</dbReference>
<dbReference type="HOGENOM" id="CLU_018869_0_1_9"/>
<dbReference type="OrthoDB" id="9807403at2"/>
<dbReference type="PhylomeDB" id="Q8EU18"/>
<dbReference type="Proteomes" id="UP000000822">
    <property type="component" value="Chromosome"/>
</dbReference>
<dbReference type="GO" id="GO:0005737">
    <property type="term" value="C:cytoplasm"/>
    <property type="evidence" value="ECO:0007669"/>
    <property type="project" value="UniProtKB-SubCell"/>
</dbReference>
<dbReference type="GO" id="GO:0005524">
    <property type="term" value="F:ATP binding"/>
    <property type="evidence" value="ECO:0007669"/>
    <property type="project" value="UniProtKB-UniRule"/>
</dbReference>
<dbReference type="GO" id="GO:0032267">
    <property type="term" value="F:tRNA(Ile)-lysidine synthase activity"/>
    <property type="evidence" value="ECO:0007669"/>
    <property type="project" value="UniProtKB-EC"/>
</dbReference>
<dbReference type="GO" id="GO:0006400">
    <property type="term" value="P:tRNA modification"/>
    <property type="evidence" value="ECO:0007669"/>
    <property type="project" value="UniProtKB-UniRule"/>
</dbReference>
<dbReference type="CDD" id="cd01992">
    <property type="entry name" value="TilS_N"/>
    <property type="match status" value="1"/>
</dbReference>
<dbReference type="Gene3D" id="3.30.465.60">
    <property type="match status" value="1"/>
</dbReference>
<dbReference type="Gene3D" id="3.40.50.620">
    <property type="entry name" value="HUPs"/>
    <property type="match status" value="1"/>
</dbReference>
<dbReference type="HAMAP" id="MF_01161">
    <property type="entry name" value="tRNA_Ile_lys_synt"/>
    <property type="match status" value="1"/>
</dbReference>
<dbReference type="InterPro" id="IPR012796">
    <property type="entry name" value="Lysidine-tRNA-synth_C"/>
</dbReference>
<dbReference type="InterPro" id="IPR014729">
    <property type="entry name" value="Rossmann-like_a/b/a_fold"/>
</dbReference>
<dbReference type="InterPro" id="IPR011063">
    <property type="entry name" value="TilS/TtcA_N"/>
</dbReference>
<dbReference type="InterPro" id="IPR012094">
    <property type="entry name" value="tRNA_Ile_lys_synt"/>
</dbReference>
<dbReference type="InterPro" id="IPR012795">
    <property type="entry name" value="tRNA_Ile_lys_synt_N"/>
</dbReference>
<dbReference type="NCBIfam" id="TIGR02433">
    <property type="entry name" value="lysidine_TilS_C"/>
    <property type="match status" value="1"/>
</dbReference>
<dbReference type="NCBIfam" id="TIGR02432">
    <property type="entry name" value="lysidine_TilS_N"/>
    <property type="match status" value="1"/>
</dbReference>
<dbReference type="PANTHER" id="PTHR43033">
    <property type="entry name" value="TRNA(ILE)-LYSIDINE SYNTHASE-RELATED"/>
    <property type="match status" value="1"/>
</dbReference>
<dbReference type="PANTHER" id="PTHR43033:SF1">
    <property type="entry name" value="TRNA(ILE)-LYSIDINE SYNTHASE-RELATED"/>
    <property type="match status" value="1"/>
</dbReference>
<dbReference type="Pfam" id="PF01171">
    <property type="entry name" value="ATP_bind_3"/>
    <property type="match status" value="1"/>
</dbReference>
<dbReference type="Pfam" id="PF11734">
    <property type="entry name" value="TilS_C"/>
    <property type="match status" value="1"/>
</dbReference>
<dbReference type="SMART" id="SM00977">
    <property type="entry name" value="TilS_C"/>
    <property type="match status" value="1"/>
</dbReference>
<dbReference type="SUPFAM" id="SSF52402">
    <property type="entry name" value="Adenine nucleotide alpha hydrolases-like"/>
    <property type="match status" value="1"/>
</dbReference>
<dbReference type="SUPFAM" id="SSF82829">
    <property type="entry name" value="MesJ substrate recognition domain-like"/>
    <property type="match status" value="1"/>
</dbReference>
<dbReference type="SUPFAM" id="SSF56037">
    <property type="entry name" value="PheT/TilS domain"/>
    <property type="match status" value="1"/>
</dbReference>
<keyword id="KW-0067">ATP-binding</keyword>
<keyword id="KW-0963">Cytoplasm</keyword>
<keyword id="KW-0436">Ligase</keyword>
<keyword id="KW-0547">Nucleotide-binding</keyword>
<keyword id="KW-1185">Reference proteome</keyword>
<keyword id="KW-0819">tRNA processing</keyword>
<accession>Q8EU18</accession>
<feature type="chain" id="PRO_0000181737" description="tRNA(Ile)-lysidine synthase">
    <location>
        <begin position="1"/>
        <end position="466"/>
    </location>
</feature>
<feature type="binding site" evidence="1">
    <location>
        <begin position="26"/>
        <end position="31"/>
    </location>
    <ligand>
        <name>ATP</name>
        <dbReference type="ChEBI" id="CHEBI:30616"/>
    </ligand>
</feature>
<gene>
    <name evidence="1" type="primary">tilS</name>
    <name type="ordered locus">OB0077</name>
</gene>
<evidence type="ECO:0000255" key="1">
    <source>
        <dbReference type="HAMAP-Rule" id="MF_01161"/>
    </source>
</evidence>